<sequence length="219" mass="24446">MVDLKTKAFDFAKNFAIALDGPAASGKGTIGLILAKKFSLQYFQSSIVYRQLAFDCINQKIDVTDMDAVIALSKALKLDSHLDLEHESIGDMASQIAVISEVRNNLNKYLINLVKTTPRIIMEGRDIGTVVVPEADLKIFITANPQIRAERRYKQLQAKGKKCILDEILRQIILRDKRDKERKAAPLLPASDALIIDTSELSAMEVVEEVTNYIKNKIA</sequence>
<proteinExistence type="inferred from homology"/>
<gene>
    <name evidence="1" type="primary">cmk</name>
    <name type="ordered locus">A1C_04245</name>
</gene>
<reference key="1">
    <citation type="submission" date="2007-09" db="EMBL/GenBank/DDBJ databases">
        <title>Complete genome sequence of Rickettsia akari.</title>
        <authorList>
            <person name="Madan A."/>
            <person name="Fahey J."/>
            <person name="Helton E."/>
            <person name="Ketteman M."/>
            <person name="Madan A."/>
            <person name="Rodrigues S."/>
            <person name="Sanchez A."/>
            <person name="Whiting M."/>
            <person name="Dasch G."/>
            <person name="Eremeeva M."/>
        </authorList>
    </citation>
    <scope>NUCLEOTIDE SEQUENCE [LARGE SCALE GENOMIC DNA]</scope>
    <source>
        <strain>Hartford</strain>
    </source>
</reference>
<dbReference type="EC" id="2.7.4.25" evidence="1"/>
<dbReference type="EMBL" id="CP000847">
    <property type="protein sequence ID" value="ABV75121.1"/>
    <property type="molecule type" value="Genomic_DNA"/>
</dbReference>
<dbReference type="RefSeq" id="WP_012149751.1">
    <property type="nucleotide sequence ID" value="NC_009881.1"/>
</dbReference>
<dbReference type="SMR" id="A8GNZ6"/>
<dbReference type="STRING" id="293614.A1C_04245"/>
<dbReference type="KEGG" id="rak:A1C_04245"/>
<dbReference type="eggNOG" id="COG0283">
    <property type="taxonomic scope" value="Bacteria"/>
</dbReference>
<dbReference type="HOGENOM" id="CLU_079959_0_2_5"/>
<dbReference type="Proteomes" id="UP000006830">
    <property type="component" value="Chromosome"/>
</dbReference>
<dbReference type="GO" id="GO:0005737">
    <property type="term" value="C:cytoplasm"/>
    <property type="evidence" value="ECO:0007669"/>
    <property type="project" value="UniProtKB-SubCell"/>
</dbReference>
<dbReference type="GO" id="GO:0005524">
    <property type="term" value="F:ATP binding"/>
    <property type="evidence" value="ECO:0007669"/>
    <property type="project" value="UniProtKB-UniRule"/>
</dbReference>
<dbReference type="GO" id="GO:0036430">
    <property type="term" value="F:CMP kinase activity"/>
    <property type="evidence" value="ECO:0007669"/>
    <property type="project" value="RHEA"/>
</dbReference>
<dbReference type="GO" id="GO:0036431">
    <property type="term" value="F:dCMP kinase activity"/>
    <property type="evidence" value="ECO:0007669"/>
    <property type="project" value="RHEA"/>
</dbReference>
<dbReference type="GO" id="GO:0006220">
    <property type="term" value="P:pyrimidine nucleotide metabolic process"/>
    <property type="evidence" value="ECO:0007669"/>
    <property type="project" value="UniProtKB-UniRule"/>
</dbReference>
<dbReference type="CDD" id="cd02020">
    <property type="entry name" value="CMPK"/>
    <property type="match status" value="1"/>
</dbReference>
<dbReference type="Gene3D" id="3.40.50.300">
    <property type="entry name" value="P-loop containing nucleotide triphosphate hydrolases"/>
    <property type="match status" value="1"/>
</dbReference>
<dbReference type="HAMAP" id="MF_00238">
    <property type="entry name" value="Cytidyl_kinase_type1"/>
    <property type="match status" value="1"/>
</dbReference>
<dbReference type="InterPro" id="IPR003136">
    <property type="entry name" value="Cytidylate_kin"/>
</dbReference>
<dbReference type="InterPro" id="IPR011994">
    <property type="entry name" value="Cytidylate_kinase_dom"/>
</dbReference>
<dbReference type="InterPro" id="IPR027417">
    <property type="entry name" value="P-loop_NTPase"/>
</dbReference>
<dbReference type="NCBIfam" id="TIGR00017">
    <property type="entry name" value="cmk"/>
    <property type="match status" value="1"/>
</dbReference>
<dbReference type="Pfam" id="PF02224">
    <property type="entry name" value="Cytidylate_kin"/>
    <property type="match status" value="1"/>
</dbReference>
<dbReference type="SUPFAM" id="SSF52540">
    <property type="entry name" value="P-loop containing nucleoside triphosphate hydrolases"/>
    <property type="match status" value="1"/>
</dbReference>
<accession>A8GNZ6</accession>
<organism>
    <name type="scientific">Rickettsia akari (strain Hartford)</name>
    <dbReference type="NCBI Taxonomy" id="293614"/>
    <lineage>
        <taxon>Bacteria</taxon>
        <taxon>Pseudomonadati</taxon>
        <taxon>Pseudomonadota</taxon>
        <taxon>Alphaproteobacteria</taxon>
        <taxon>Rickettsiales</taxon>
        <taxon>Rickettsiaceae</taxon>
        <taxon>Rickettsieae</taxon>
        <taxon>Rickettsia</taxon>
        <taxon>spotted fever group</taxon>
    </lineage>
</organism>
<name>KCY_RICAH</name>
<keyword id="KW-0067">ATP-binding</keyword>
<keyword id="KW-0963">Cytoplasm</keyword>
<keyword id="KW-0418">Kinase</keyword>
<keyword id="KW-0547">Nucleotide-binding</keyword>
<keyword id="KW-0808">Transferase</keyword>
<evidence type="ECO:0000255" key="1">
    <source>
        <dbReference type="HAMAP-Rule" id="MF_00238"/>
    </source>
</evidence>
<protein>
    <recommendedName>
        <fullName evidence="1">Cytidylate kinase</fullName>
        <shortName evidence="1">CK</shortName>
        <ecNumber evidence="1">2.7.4.25</ecNumber>
    </recommendedName>
    <alternativeName>
        <fullName evidence="1">Cytidine monophosphate kinase</fullName>
        <shortName evidence="1">CMP kinase</shortName>
    </alternativeName>
</protein>
<feature type="chain" id="PRO_1000048264" description="Cytidylate kinase">
    <location>
        <begin position="1"/>
        <end position="219"/>
    </location>
</feature>
<feature type="binding site" evidence="1">
    <location>
        <begin position="21"/>
        <end position="29"/>
    </location>
    <ligand>
        <name>ATP</name>
        <dbReference type="ChEBI" id="CHEBI:30616"/>
    </ligand>
</feature>
<comment type="catalytic activity">
    <reaction evidence="1">
        <text>CMP + ATP = CDP + ADP</text>
        <dbReference type="Rhea" id="RHEA:11600"/>
        <dbReference type="ChEBI" id="CHEBI:30616"/>
        <dbReference type="ChEBI" id="CHEBI:58069"/>
        <dbReference type="ChEBI" id="CHEBI:60377"/>
        <dbReference type="ChEBI" id="CHEBI:456216"/>
        <dbReference type="EC" id="2.7.4.25"/>
    </reaction>
</comment>
<comment type="catalytic activity">
    <reaction evidence="1">
        <text>dCMP + ATP = dCDP + ADP</text>
        <dbReference type="Rhea" id="RHEA:25094"/>
        <dbReference type="ChEBI" id="CHEBI:30616"/>
        <dbReference type="ChEBI" id="CHEBI:57566"/>
        <dbReference type="ChEBI" id="CHEBI:58593"/>
        <dbReference type="ChEBI" id="CHEBI:456216"/>
        <dbReference type="EC" id="2.7.4.25"/>
    </reaction>
</comment>
<comment type="subcellular location">
    <subcellularLocation>
        <location evidence="1">Cytoplasm</location>
    </subcellularLocation>
</comment>
<comment type="similarity">
    <text evidence="1">Belongs to the cytidylate kinase family. Type 1 subfamily.</text>
</comment>